<name>METI_YERPE</name>
<feature type="chain" id="PRO_0000060102" description="D-methionine transport system permease protein MetI">
    <location>
        <begin position="1"/>
        <end position="217"/>
    </location>
</feature>
<feature type="transmembrane region" description="Helical" evidence="2">
    <location>
        <begin position="20"/>
        <end position="40"/>
    </location>
</feature>
<feature type="transmembrane region" description="Helical" evidence="2">
    <location>
        <begin position="58"/>
        <end position="78"/>
    </location>
</feature>
<feature type="transmembrane region" description="Helical" evidence="2">
    <location>
        <begin position="81"/>
        <end position="101"/>
    </location>
</feature>
<feature type="transmembrane region" description="Helical" evidence="2">
    <location>
        <begin position="152"/>
        <end position="172"/>
    </location>
</feature>
<feature type="transmembrane region" description="Helical" evidence="2">
    <location>
        <begin position="186"/>
        <end position="206"/>
    </location>
</feature>
<feature type="domain" description="ABC transmembrane type-1" evidence="2">
    <location>
        <begin position="13"/>
        <end position="204"/>
    </location>
</feature>
<keyword id="KW-0029">Amino-acid transport</keyword>
<keyword id="KW-0997">Cell inner membrane</keyword>
<keyword id="KW-1003">Cell membrane</keyword>
<keyword id="KW-0472">Membrane</keyword>
<keyword id="KW-1185">Reference proteome</keyword>
<keyword id="KW-0812">Transmembrane</keyword>
<keyword id="KW-1133">Transmembrane helix</keyword>
<keyword id="KW-0813">Transport</keyword>
<comment type="function">
    <text evidence="1">Part of the binding-protein-dependent transport system for D-methionine and the toxic methionine analog alpha-methyl-methionine. Probably responsible for the translocation of the substrate across the membrane (By similarity).</text>
</comment>
<comment type="subcellular location">
    <subcellularLocation>
        <location evidence="1">Cell inner membrane</location>
        <topology evidence="2">Multi-pass membrane protein</topology>
    </subcellularLocation>
</comment>
<comment type="similarity">
    <text evidence="3">Belongs to the binding-protein-dependent transport system permease family. CysTW subfamily.</text>
</comment>
<organism>
    <name type="scientific">Yersinia pestis</name>
    <dbReference type="NCBI Taxonomy" id="632"/>
    <lineage>
        <taxon>Bacteria</taxon>
        <taxon>Pseudomonadati</taxon>
        <taxon>Pseudomonadota</taxon>
        <taxon>Gammaproteobacteria</taxon>
        <taxon>Enterobacterales</taxon>
        <taxon>Yersiniaceae</taxon>
        <taxon>Yersinia</taxon>
    </lineage>
</organism>
<sequence length="217" mass="23218">MSEAMMWLMARGVWETLMMTFVSGFFGFVLGLPVGVLLYVTRPGQIIANNKIYRTLSGVVNIFRSIPFIILLVWMIPFTRMIVGTSIGLQAAIVPLTVGAAPFIARMVENALLEIPSGLVEAARAMGATPMQIIKKVLLPEALPGLVNAATITLITLVGYSAMGGAVGAGGLGQIGYQYGYIGYNATVMNTVLVLLVILVYLIQLSGDRIVKAVTHK</sequence>
<reference key="1">
    <citation type="journal article" date="2001" name="Nature">
        <title>Genome sequence of Yersinia pestis, the causative agent of plague.</title>
        <authorList>
            <person name="Parkhill J."/>
            <person name="Wren B.W."/>
            <person name="Thomson N.R."/>
            <person name="Titball R.W."/>
            <person name="Holden M.T.G."/>
            <person name="Prentice M.B."/>
            <person name="Sebaihia M."/>
            <person name="James K.D."/>
            <person name="Churcher C.M."/>
            <person name="Mungall K.L."/>
            <person name="Baker S."/>
            <person name="Basham D."/>
            <person name="Bentley S.D."/>
            <person name="Brooks K."/>
            <person name="Cerdeno-Tarraga A.-M."/>
            <person name="Chillingworth T."/>
            <person name="Cronin A."/>
            <person name="Davies R.M."/>
            <person name="Davis P."/>
            <person name="Dougan G."/>
            <person name="Feltwell T."/>
            <person name="Hamlin N."/>
            <person name="Holroyd S."/>
            <person name="Jagels K."/>
            <person name="Karlyshev A.V."/>
            <person name="Leather S."/>
            <person name="Moule S."/>
            <person name="Oyston P.C.F."/>
            <person name="Quail M.A."/>
            <person name="Rutherford K.M."/>
            <person name="Simmonds M."/>
            <person name="Skelton J."/>
            <person name="Stevens K."/>
            <person name="Whitehead S."/>
            <person name="Barrell B.G."/>
        </authorList>
    </citation>
    <scope>NUCLEOTIDE SEQUENCE [LARGE SCALE GENOMIC DNA]</scope>
    <source>
        <strain>CO-92 / Biovar Orientalis</strain>
    </source>
</reference>
<reference key="2">
    <citation type="journal article" date="2002" name="J. Bacteriol.">
        <title>Genome sequence of Yersinia pestis KIM.</title>
        <authorList>
            <person name="Deng W."/>
            <person name="Burland V."/>
            <person name="Plunkett G. III"/>
            <person name="Boutin A."/>
            <person name="Mayhew G.F."/>
            <person name="Liss P."/>
            <person name="Perna N.T."/>
            <person name="Rose D.J."/>
            <person name="Mau B."/>
            <person name="Zhou S."/>
            <person name="Schwartz D.C."/>
            <person name="Fetherston J.D."/>
            <person name="Lindler L.E."/>
            <person name="Brubaker R.R."/>
            <person name="Plano G.V."/>
            <person name="Straley S.C."/>
            <person name="McDonough K.A."/>
            <person name="Nilles M.L."/>
            <person name="Matson J.S."/>
            <person name="Blattner F.R."/>
            <person name="Perry R.D."/>
        </authorList>
    </citation>
    <scope>NUCLEOTIDE SEQUENCE [LARGE SCALE GENOMIC DNA]</scope>
    <source>
        <strain>KIM10+ / Biovar Mediaevalis</strain>
    </source>
</reference>
<reference key="3">
    <citation type="journal article" date="2004" name="DNA Res.">
        <title>Complete genome sequence of Yersinia pestis strain 91001, an isolate avirulent to humans.</title>
        <authorList>
            <person name="Song Y."/>
            <person name="Tong Z."/>
            <person name="Wang J."/>
            <person name="Wang L."/>
            <person name="Guo Z."/>
            <person name="Han Y."/>
            <person name="Zhang J."/>
            <person name="Pei D."/>
            <person name="Zhou D."/>
            <person name="Qin H."/>
            <person name="Pang X."/>
            <person name="Han Y."/>
            <person name="Zhai J."/>
            <person name="Li M."/>
            <person name="Cui B."/>
            <person name="Qi Z."/>
            <person name="Jin L."/>
            <person name="Dai R."/>
            <person name="Chen F."/>
            <person name="Li S."/>
            <person name="Ye C."/>
            <person name="Du Z."/>
            <person name="Lin W."/>
            <person name="Wang J."/>
            <person name="Yu J."/>
            <person name="Yang H."/>
            <person name="Wang J."/>
            <person name="Huang P."/>
            <person name="Yang R."/>
        </authorList>
    </citation>
    <scope>NUCLEOTIDE SEQUENCE [LARGE SCALE GENOMIC DNA]</scope>
    <source>
        <strain>91001 / Biovar Mediaevalis</strain>
    </source>
</reference>
<gene>
    <name type="primary">metI</name>
    <name type="ordered locus">YPO1072</name>
    <name type="ordered locus">y3105</name>
    <name type="ordered locus">YP_2777</name>
</gene>
<protein>
    <recommendedName>
        <fullName>D-methionine transport system permease protein MetI</fullName>
    </recommendedName>
</protein>
<dbReference type="EMBL" id="AL590842">
    <property type="protein sequence ID" value="CAL19738.1"/>
    <property type="molecule type" value="Genomic_DNA"/>
</dbReference>
<dbReference type="EMBL" id="AE009952">
    <property type="protein sequence ID" value="AAM86655.1"/>
    <property type="molecule type" value="Genomic_DNA"/>
</dbReference>
<dbReference type="EMBL" id="AE017042">
    <property type="protein sequence ID" value="AAS62961.1"/>
    <property type="molecule type" value="Genomic_DNA"/>
</dbReference>
<dbReference type="PIR" id="AH0131">
    <property type="entry name" value="AH0131"/>
</dbReference>
<dbReference type="RefSeq" id="WP_002212160.1">
    <property type="nucleotide sequence ID" value="NZ_WUCM01000044.1"/>
</dbReference>
<dbReference type="RefSeq" id="YP_002346116.1">
    <property type="nucleotide sequence ID" value="NC_003143.1"/>
</dbReference>
<dbReference type="SMR" id="Q8ZH39"/>
<dbReference type="STRING" id="214092.YPO1072"/>
<dbReference type="PaxDb" id="214092-YPO1072"/>
<dbReference type="DNASU" id="1148052"/>
<dbReference type="EnsemblBacteria" id="AAS62961">
    <property type="protein sequence ID" value="AAS62961"/>
    <property type="gene ID" value="YP_2777"/>
</dbReference>
<dbReference type="KEGG" id="ype:YPO1072"/>
<dbReference type="KEGG" id="ypk:y3105"/>
<dbReference type="KEGG" id="ypm:YP_2777"/>
<dbReference type="PATRIC" id="fig|214092.21.peg.1361"/>
<dbReference type="eggNOG" id="COG2011">
    <property type="taxonomic scope" value="Bacteria"/>
</dbReference>
<dbReference type="HOGENOM" id="CLU_077375_0_1_6"/>
<dbReference type="OMA" id="TFWSAIF"/>
<dbReference type="OrthoDB" id="9793490at2"/>
<dbReference type="Proteomes" id="UP000000815">
    <property type="component" value="Chromosome"/>
</dbReference>
<dbReference type="Proteomes" id="UP000001019">
    <property type="component" value="Chromosome"/>
</dbReference>
<dbReference type="Proteomes" id="UP000002490">
    <property type="component" value="Chromosome"/>
</dbReference>
<dbReference type="GO" id="GO:0005886">
    <property type="term" value="C:plasma membrane"/>
    <property type="evidence" value="ECO:0000318"/>
    <property type="project" value="GO_Central"/>
</dbReference>
<dbReference type="GO" id="GO:0048473">
    <property type="term" value="P:D-methionine transmembrane transport"/>
    <property type="evidence" value="ECO:0000318"/>
    <property type="project" value="GO_Central"/>
</dbReference>
<dbReference type="CDD" id="cd06261">
    <property type="entry name" value="TM_PBP2"/>
    <property type="match status" value="1"/>
</dbReference>
<dbReference type="FunFam" id="1.10.3720.10:FF:000002">
    <property type="entry name" value="D-methionine ABC transporter permease MetI"/>
    <property type="match status" value="1"/>
</dbReference>
<dbReference type="Gene3D" id="1.10.3720.10">
    <property type="entry name" value="MetI-like"/>
    <property type="match status" value="1"/>
</dbReference>
<dbReference type="InterPro" id="IPR051322">
    <property type="entry name" value="AA_ABC_Transporter_Permease"/>
</dbReference>
<dbReference type="InterPro" id="IPR000515">
    <property type="entry name" value="MetI-like"/>
</dbReference>
<dbReference type="InterPro" id="IPR035906">
    <property type="entry name" value="MetI-like_sf"/>
</dbReference>
<dbReference type="NCBIfam" id="NF008049">
    <property type="entry name" value="PRK10782.1"/>
    <property type="match status" value="1"/>
</dbReference>
<dbReference type="PANTHER" id="PTHR30450">
    <property type="entry name" value="ABC TRANSPORTER PERMEASE"/>
    <property type="match status" value="1"/>
</dbReference>
<dbReference type="PANTHER" id="PTHR30450:SF8">
    <property type="entry name" value="D-METHIONINE TRANSPORT SYSTEM PERMEASE PROTEIN METI"/>
    <property type="match status" value="1"/>
</dbReference>
<dbReference type="Pfam" id="PF00528">
    <property type="entry name" value="BPD_transp_1"/>
    <property type="match status" value="1"/>
</dbReference>
<dbReference type="SUPFAM" id="SSF161098">
    <property type="entry name" value="MetI-like"/>
    <property type="match status" value="1"/>
</dbReference>
<dbReference type="PROSITE" id="PS50928">
    <property type="entry name" value="ABC_TM1"/>
    <property type="match status" value="1"/>
</dbReference>
<accession>Q8ZH39</accession>
<accession>Q0WHX2</accession>
<evidence type="ECO:0000250" key="1"/>
<evidence type="ECO:0000255" key="2">
    <source>
        <dbReference type="PROSITE-ProRule" id="PRU00441"/>
    </source>
</evidence>
<evidence type="ECO:0000305" key="3"/>
<proteinExistence type="inferred from homology"/>